<keyword id="KW-0067">ATP-binding</keyword>
<keyword id="KW-0414">Isoprene biosynthesis</keyword>
<keyword id="KW-0418">Kinase</keyword>
<keyword id="KW-0547">Nucleotide-binding</keyword>
<keyword id="KW-1185">Reference proteome</keyword>
<keyword id="KW-0808">Transferase</keyword>
<organism>
    <name type="scientific">Thermosipho africanus (strain TCF52B)</name>
    <dbReference type="NCBI Taxonomy" id="484019"/>
    <lineage>
        <taxon>Bacteria</taxon>
        <taxon>Thermotogati</taxon>
        <taxon>Thermotogota</taxon>
        <taxon>Thermotogae</taxon>
        <taxon>Thermotogales</taxon>
        <taxon>Fervidobacteriaceae</taxon>
        <taxon>Thermosipho</taxon>
    </lineage>
</organism>
<accession>B7IG15</accession>
<comment type="function">
    <text evidence="1">Catalyzes the phosphorylation of the position 2 hydroxy group of 4-diphosphocytidyl-2C-methyl-D-erythritol.</text>
</comment>
<comment type="catalytic activity">
    <reaction evidence="1">
        <text>4-CDP-2-C-methyl-D-erythritol + ATP = 4-CDP-2-C-methyl-D-erythritol 2-phosphate + ADP + H(+)</text>
        <dbReference type="Rhea" id="RHEA:18437"/>
        <dbReference type="ChEBI" id="CHEBI:15378"/>
        <dbReference type="ChEBI" id="CHEBI:30616"/>
        <dbReference type="ChEBI" id="CHEBI:57823"/>
        <dbReference type="ChEBI" id="CHEBI:57919"/>
        <dbReference type="ChEBI" id="CHEBI:456216"/>
        <dbReference type="EC" id="2.7.1.148"/>
    </reaction>
</comment>
<comment type="pathway">
    <text evidence="1">Isoprenoid biosynthesis; isopentenyl diphosphate biosynthesis via DXP pathway; isopentenyl diphosphate from 1-deoxy-D-xylulose 5-phosphate: step 3/6.</text>
</comment>
<comment type="similarity">
    <text evidence="1">Belongs to the GHMP kinase family. IspE subfamily.</text>
</comment>
<gene>
    <name evidence="1" type="primary">ispE</name>
    <name type="ordered locus">THA_541</name>
</gene>
<name>ISPE_THEAB</name>
<protein>
    <recommendedName>
        <fullName evidence="1">4-diphosphocytidyl-2-C-methyl-D-erythritol kinase</fullName>
        <shortName evidence="1">CMK</shortName>
        <ecNumber evidence="1">2.7.1.148</ecNumber>
    </recommendedName>
    <alternativeName>
        <fullName evidence="1">4-(cytidine-5'-diphospho)-2-C-methyl-D-erythritol kinase</fullName>
    </alternativeName>
</protein>
<evidence type="ECO:0000255" key="1">
    <source>
        <dbReference type="HAMAP-Rule" id="MF_00061"/>
    </source>
</evidence>
<proteinExistence type="inferred from homology"/>
<dbReference type="EC" id="2.7.1.148" evidence="1"/>
<dbReference type="EMBL" id="CP001185">
    <property type="protein sequence ID" value="ACJ75029.1"/>
    <property type="molecule type" value="Genomic_DNA"/>
</dbReference>
<dbReference type="RefSeq" id="WP_004100610.1">
    <property type="nucleotide sequence ID" value="NC_011653.1"/>
</dbReference>
<dbReference type="SMR" id="B7IG15"/>
<dbReference type="STRING" id="484019.THA_541"/>
<dbReference type="KEGG" id="taf:THA_541"/>
<dbReference type="eggNOG" id="COG1947">
    <property type="taxonomic scope" value="Bacteria"/>
</dbReference>
<dbReference type="HOGENOM" id="CLU_053057_2_0_0"/>
<dbReference type="OrthoDB" id="9809438at2"/>
<dbReference type="UniPathway" id="UPA00056">
    <property type="reaction ID" value="UER00094"/>
</dbReference>
<dbReference type="Proteomes" id="UP000002453">
    <property type="component" value="Chromosome"/>
</dbReference>
<dbReference type="GO" id="GO:0050515">
    <property type="term" value="F:4-(cytidine 5'-diphospho)-2-C-methyl-D-erythritol kinase activity"/>
    <property type="evidence" value="ECO:0007669"/>
    <property type="project" value="UniProtKB-UniRule"/>
</dbReference>
<dbReference type="GO" id="GO:0005524">
    <property type="term" value="F:ATP binding"/>
    <property type="evidence" value="ECO:0007669"/>
    <property type="project" value="UniProtKB-UniRule"/>
</dbReference>
<dbReference type="GO" id="GO:0019288">
    <property type="term" value="P:isopentenyl diphosphate biosynthetic process, methylerythritol 4-phosphate pathway"/>
    <property type="evidence" value="ECO:0007669"/>
    <property type="project" value="UniProtKB-UniRule"/>
</dbReference>
<dbReference type="GO" id="GO:0016114">
    <property type="term" value="P:terpenoid biosynthetic process"/>
    <property type="evidence" value="ECO:0007669"/>
    <property type="project" value="InterPro"/>
</dbReference>
<dbReference type="Gene3D" id="3.30.230.10">
    <property type="match status" value="1"/>
</dbReference>
<dbReference type="Gene3D" id="3.30.70.890">
    <property type="entry name" value="GHMP kinase, C-terminal domain"/>
    <property type="match status" value="1"/>
</dbReference>
<dbReference type="HAMAP" id="MF_00061">
    <property type="entry name" value="IspE"/>
    <property type="match status" value="1"/>
</dbReference>
<dbReference type="InterPro" id="IPR036554">
    <property type="entry name" value="GHMP_kinase_C_sf"/>
</dbReference>
<dbReference type="InterPro" id="IPR006204">
    <property type="entry name" value="GHMP_kinase_N_dom"/>
</dbReference>
<dbReference type="InterPro" id="IPR004424">
    <property type="entry name" value="IspE"/>
</dbReference>
<dbReference type="InterPro" id="IPR020568">
    <property type="entry name" value="Ribosomal_Su5_D2-typ_SF"/>
</dbReference>
<dbReference type="InterPro" id="IPR014721">
    <property type="entry name" value="Ribsml_uS5_D2-typ_fold_subgr"/>
</dbReference>
<dbReference type="NCBIfam" id="TIGR00154">
    <property type="entry name" value="ispE"/>
    <property type="match status" value="1"/>
</dbReference>
<dbReference type="PANTHER" id="PTHR43527">
    <property type="entry name" value="4-DIPHOSPHOCYTIDYL-2-C-METHYL-D-ERYTHRITOL KINASE, CHLOROPLASTIC"/>
    <property type="match status" value="1"/>
</dbReference>
<dbReference type="PANTHER" id="PTHR43527:SF2">
    <property type="entry name" value="4-DIPHOSPHOCYTIDYL-2-C-METHYL-D-ERYTHRITOL KINASE, CHLOROPLASTIC"/>
    <property type="match status" value="1"/>
</dbReference>
<dbReference type="Pfam" id="PF00288">
    <property type="entry name" value="GHMP_kinases_N"/>
    <property type="match status" value="1"/>
</dbReference>
<dbReference type="PIRSF" id="PIRSF010376">
    <property type="entry name" value="IspE"/>
    <property type="match status" value="1"/>
</dbReference>
<dbReference type="SUPFAM" id="SSF55060">
    <property type="entry name" value="GHMP Kinase, C-terminal domain"/>
    <property type="match status" value="1"/>
</dbReference>
<dbReference type="SUPFAM" id="SSF54211">
    <property type="entry name" value="Ribosomal protein S5 domain 2-like"/>
    <property type="match status" value="1"/>
</dbReference>
<reference key="1">
    <citation type="journal article" date="2009" name="J. Bacteriol.">
        <title>The genome of Thermosipho africanus TCF52B: lateral genetic connections to the Firmicutes and Archaea.</title>
        <authorList>
            <person name="Nesboe C.L."/>
            <person name="Bapteste E."/>
            <person name="Curtis B."/>
            <person name="Dahle H."/>
            <person name="Lopez P."/>
            <person name="Macleod D."/>
            <person name="Dlutek M."/>
            <person name="Bowman S."/>
            <person name="Zhaxybayeva O."/>
            <person name="Birkeland N.-K."/>
            <person name="Doolittle W.F."/>
        </authorList>
    </citation>
    <scope>NUCLEOTIDE SEQUENCE [LARGE SCALE GENOMIC DNA]</scope>
    <source>
        <strain>TCF52B</strain>
    </source>
</reference>
<feature type="chain" id="PRO_1000116936" description="4-diphosphocytidyl-2-C-methyl-D-erythritol kinase">
    <location>
        <begin position="1"/>
        <end position="275"/>
    </location>
</feature>
<feature type="active site" evidence="1">
    <location>
        <position position="14"/>
    </location>
</feature>
<feature type="active site" evidence="1">
    <location>
        <position position="134"/>
    </location>
</feature>
<feature type="binding site" evidence="1">
    <location>
        <begin position="94"/>
        <end position="104"/>
    </location>
    <ligand>
        <name>ATP</name>
        <dbReference type="ChEBI" id="CHEBI:30616"/>
    </ligand>
</feature>
<sequence>MEQNGSTVVRAYAKINLSLDVVKKRDDGYHEINSLFQNISLYDRLSIVKIDRGLEIKSNVEIENNILYKVWDLFCEKYKEPEFGFRVILEKNIPMEAGLGGGSADAAALLFFLGKTFKIPTSELLNLAIKIGSDVPFFLIGGTAVVKGKGEKIEPLPALKGYYVDLLTSENGISTKEAYSLLNPSLFNRAPCSPYVLYEAYKNRNAGEIKRCTYNIFEKVVANNYKEIMANIKRLRRTHITAALTGSGSAVFGVSFRDGKYKFVSRGVEYEETKL</sequence>